<protein>
    <recommendedName>
        <fullName evidence="1">Homoserine O-acetyltransferase</fullName>
        <shortName evidence="1 3">HAT</shortName>
        <ecNumber evidence="1 2">2.3.1.31</ecNumber>
    </recommendedName>
    <alternativeName>
        <fullName evidence="1">Homoserine transacetylase</fullName>
        <shortName evidence="1">HTA</shortName>
    </alternativeName>
</protein>
<organism>
    <name type="scientific">Thermotoga petrophila (strain ATCC BAA-488 / DSM 13995 / JCM 10881 / RKU-1)</name>
    <dbReference type="NCBI Taxonomy" id="390874"/>
    <lineage>
        <taxon>Bacteria</taxon>
        <taxon>Thermotogati</taxon>
        <taxon>Thermotogota</taxon>
        <taxon>Thermotogae</taxon>
        <taxon>Thermotogales</taxon>
        <taxon>Thermotogaceae</taxon>
        <taxon>Thermotoga</taxon>
    </lineage>
</organism>
<proteinExistence type="evidence at protein level"/>
<accession>A5IIQ2</accession>
<keyword id="KW-0012">Acyltransferase</keyword>
<keyword id="KW-0028">Amino-acid biosynthesis</keyword>
<keyword id="KW-0963">Cytoplasm</keyword>
<keyword id="KW-0486">Methionine biosynthesis</keyword>
<keyword id="KW-0808">Transferase</keyword>
<name>METAA_THEP1</name>
<dbReference type="EC" id="2.3.1.31" evidence="1 2"/>
<dbReference type="EMBL" id="CP000702">
    <property type="protein sequence ID" value="ABQ46075.1"/>
    <property type="molecule type" value="Genomic_DNA"/>
</dbReference>
<dbReference type="SMR" id="A5IIQ2"/>
<dbReference type="STRING" id="390874.Tpet_0046"/>
<dbReference type="KEGG" id="tpt:Tpet_0046"/>
<dbReference type="eggNOG" id="COG1897">
    <property type="taxonomic scope" value="Bacteria"/>
</dbReference>
<dbReference type="HOGENOM" id="CLU_057851_0_1_0"/>
<dbReference type="UniPathway" id="UPA00051">
    <property type="reaction ID" value="UER00074"/>
</dbReference>
<dbReference type="Proteomes" id="UP000006558">
    <property type="component" value="Chromosome"/>
</dbReference>
<dbReference type="GO" id="GO:0005737">
    <property type="term" value="C:cytoplasm"/>
    <property type="evidence" value="ECO:0007669"/>
    <property type="project" value="UniProtKB-SubCell"/>
</dbReference>
<dbReference type="GO" id="GO:0004414">
    <property type="term" value="F:homoserine O-acetyltransferase activity"/>
    <property type="evidence" value="ECO:0007669"/>
    <property type="project" value="UniProtKB-EC"/>
</dbReference>
<dbReference type="GO" id="GO:0008899">
    <property type="term" value="F:homoserine O-succinyltransferase activity"/>
    <property type="evidence" value="ECO:0007669"/>
    <property type="project" value="UniProtKB-UniRule"/>
</dbReference>
<dbReference type="GO" id="GO:0019281">
    <property type="term" value="P:L-methionine biosynthetic process from homoserine via O-succinyl-L-homoserine and cystathionine"/>
    <property type="evidence" value="ECO:0007669"/>
    <property type="project" value="InterPro"/>
</dbReference>
<dbReference type="CDD" id="cd03131">
    <property type="entry name" value="GATase1_HTS"/>
    <property type="match status" value="1"/>
</dbReference>
<dbReference type="FunFam" id="3.40.50.880:FF:000004">
    <property type="entry name" value="Homoserine O-succinyltransferase"/>
    <property type="match status" value="1"/>
</dbReference>
<dbReference type="Gene3D" id="3.40.50.880">
    <property type="match status" value="1"/>
</dbReference>
<dbReference type="HAMAP" id="MF_00295">
    <property type="entry name" value="MetA_acyltransf"/>
    <property type="match status" value="1"/>
</dbReference>
<dbReference type="InterPro" id="IPR029062">
    <property type="entry name" value="Class_I_gatase-like"/>
</dbReference>
<dbReference type="InterPro" id="IPR005697">
    <property type="entry name" value="HST_MetA"/>
</dbReference>
<dbReference type="InterPro" id="IPR033752">
    <property type="entry name" value="MetA_family"/>
</dbReference>
<dbReference type="NCBIfam" id="TIGR01001">
    <property type="entry name" value="metA"/>
    <property type="match status" value="1"/>
</dbReference>
<dbReference type="PANTHER" id="PTHR20919">
    <property type="entry name" value="HOMOSERINE O-SUCCINYLTRANSFERASE"/>
    <property type="match status" value="1"/>
</dbReference>
<dbReference type="PANTHER" id="PTHR20919:SF0">
    <property type="entry name" value="HOMOSERINE O-SUCCINYLTRANSFERASE"/>
    <property type="match status" value="1"/>
</dbReference>
<dbReference type="Pfam" id="PF04204">
    <property type="entry name" value="HTS"/>
    <property type="match status" value="1"/>
</dbReference>
<dbReference type="PIRSF" id="PIRSF000450">
    <property type="entry name" value="H_ser_succinyltr"/>
    <property type="match status" value="1"/>
</dbReference>
<dbReference type="SUPFAM" id="SSF52317">
    <property type="entry name" value="Class I glutamine amidotransferase-like"/>
    <property type="match status" value="1"/>
</dbReference>
<gene>
    <name evidence="1 3" type="primary">metAA</name>
    <name type="ordered locus">Tpet_0046</name>
</gene>
<reference key="1">
    <citation type="submission" date="2007-05" db="EMBL/GenBank/DDBJ databases">
        <title>Complete sequence of Thermotoga petrophila RKU-1.</title>
        <authorList>
            <consortium name="US DOE Joint Genome Institute"/>
            <person name="Copeland A."/>
            <person name="Lucas S."/>
            <person name="Lapidus A."/>
            <person name="Barry K."/>
            <person name="Glavina del Rio T."/>
            <person name="Dalin E."/>
            <person name="Tice H."/>
            <person name="Pitluck S."/>
            <person name="Sims D."/>
            <person name="Brettin T."/>
            <person name="Bruce D."/>
            <person name="Detter J.C."/>
            <person name="Han C."/>
            <person name="Tapia R."/>
            <person name="Schmutz J."/>
            <person name="Larimer F."/>
            <person name="Land M."/>
            <person name="Hauser L."/>
            <person name="Kyrpides N."/>
            <person name="Mikhailova N."/>
            <person name="Nelson K."/>
            <person name="Gogarten J.P."/>
            <person name="Noll K."/>
            <person name="Richardson P."/>
        </authorList>
    </citation>
    <scope>NUCLEOTIDE SEQUENCE [LARGE SCALE GENOMIC DNA]</scope>
    <source>
        <strain>ATCC BAA-488 / DSM 13995 / JCM 10881 / RKU-1</strain>
    </source>
</reference>
<reference key="2">
    <citation type="journal article" date="2017" name="Nat. Chem. Biol.">
        <title>Parallel evolution of non-homologous isofunctional enzymes in methionine biosynthesis.</title>
        <authorList>
            <person name="Bastard K."/>
            <person name="Perret A."/>
            <person name="Mariage A."/>
            <person name="Bessonnet T."/>
            <person name="Pinet-Turpault A."/>
            <person name="Petit J.L."/>
            <person name="Darii E."/>
            <person name="Bazire P."/>
            <person name="Vergne-Vaxelaire C."/>
            <person name="Brewee C."/>
            <person name="Debard A."/>
            <person name="Pellouin V."/>
            <person name="Besnard-Gonnet M."/>
            <person name="Artiguenave F."/>
            <person name="Medigue C."/>
            <person name="Vallenet D."/>
            <person name="Danchin A."/>
            <person name="Zaparucha A."/>
            <person name="Weissenbach J."/>
            <person name="Salanoubat M."/>
            <person name="de Berardinis V."/>
        </authorList>
    </citation>
    <scope>FUNCTION</scope>
    <scope>CATALYTIC ACTIVITY</scope>
</reference>
<evidence type="ECO:0000255" key="1">
    <source>
        <dbReference type="HAMAP-Rule" id="MF_00295"/>
    </source>
</evidence>
<evidence type="ECO:0000269" key="2">
    <source>
    </source>
</evidence>
<evidence type="ECO:0000303" key="3">
    <source>
    </source>
</evidence>
<comment type="function">
    <text evidence="1 2">Transfers an acetyl group from acetyl-CoA to L-homoserine, forming acetyl-L-homoserine.</text>
</comment>
<comment type="catalytic activity">
    <reaction evidence="1 2">
        <text>L-homoserine + acetyl-CoA = O-acetyl-L-homoserine + CoA</text>
        <dbReference type="Rhea" id="RHEA:13701"/>
        <dbReference type="ChEBI" id="CHEBI:57287"/>
        <dbReference type="ChEBI" id="CHEBI:57288"/>
        <dbReference type="ChEBI" id="CHEBI:57476"/>
        <dbReference type="ChEBI" id="CHEBI:57716"/>
        <dbReference type="EC" id="2.3.1.31"/>
    </reaction>
</comment>
<comment type="pathway">
    <text evidence="1">Amino-acid biosynthesis; L-methionine biosynthesis via de novo pathway; O-acetyl-L-homoserine from L-homoserine: step 1/1.</text>
</comment>
<comment type="subcellular location">
    <subcellularLocation>
        <location evidence="1">Cytoplasm</location>
    </subcellularLocation>
</comment>
<comment type="similarity">
    <text evidence="1">Belongs to the MetA family.</text>
</comment>
<feature type="chain" id="PRO_1000021858" description="Homoserine O-acetyltransferase">
    <location>
        <begin position="1"/>
        <end position="304"/>
    </location>
</feature>
<feature type="active site" description="Acyl-thioester intermediate" evidence="1">
    <location>
        <position position="142"/>
    </location>
</feature>
<feature type="active site" description="Proton acceptor" evidence="1">
    <location>
        <position position="234"/>
    </location>
</feature>
<feature type="active site" evidence="1">
    <location>
        <position position="236"/>
    </location>
</feature>
<feature type="binding site" evidence="1">
    <location>
        <position position="163"/>
    </location>
    <ligand>
        <name>substrate</name>
    </ligand>
</feature>
<feature type="binding site" evidence="1">
    <location>
        <position position="191"/>
    </location>
    <ligand>
        <name>substrate</name>
    </ligand>
</feature>
<feature type="binding site" evidence="1">
    <location>
        <position position="248"/>
    </location>
    <ligand>
        <name>substrate</name>
    </ligand>
</feature>
<feature type="site" description="Important for acyl-CoA specificity" evidence="1">
    <location>
        <position position="111"/>
    </location>
</feature>
<feature type="site" description="Important for substrate specificity" evidence="1">
    <location>
        <position position="191"/>
    </location>
</feature>
<sequence length="304" mass="35759">MPINVPSGLPAVKVLAKEGIFVMTEKRAIHQDIRPLEILILNLMPDKIKTEIQLLRLLGNTPLQVNVTLLYTETHKPKHTPIEHILKFYTTFSAVKDRKFDGFIITGAPVELLPFEEVDYWEELTEIMEWSRHNVYSTMFICWAAQAGLYYFYGIPKYELPQKLSGVYKHRVAKDSVLFRGHDDFFWAPHSRYTEVKKEDIDKVPELEILAESDEAGVYVVANKSERQIFVTGHPEYDRYTLRDEYYRDIGRNLKVPIPANYFPNDDPTKTPILTWWSHAHLFFSNWLNYCIYQKTPYRLEDIH</sequence>